<reference key="1">
    <citation type="journal article" date="2010" name="J. Proteome Res.">
        <title>Molecular diversification of peptide toxins from the tarantula Haplopelma hainanum (Ornithoctonus hainana) venom based on transcriptomic, peptidomic, and genomic analyses.</title>
        <authorList>
            <person name="Tang X."/>
            <person name="Zhang Y."/>
            <person name="Hu W."/>
            <person name="Xu D."/>
            <person name="Tao H."/>
            <person name="Yang X."/>
            <person name="Li Y."/>
            <person name="Jiang L."/>
            <person name="Liang S."/>
        </authorList>
    </citation>
    <scope>NUCLEOTIDE SEQUENCE [LARGE SCALE GENOMIC DNA / MRNA]</scope>
    <scope>PROTEIN SEQUENCE OF 51-85</scope>
    <scope>IDENTIFICATION BY MASS SPECTROMETRY</scope>
    <source>
        <tissue>Venom</tissue>
        <tissue>Venom gland</tissue>
    </source>
</reference>
<feature type="signal peptide" evidence="2">
    <location>
        <begin position="1"/>
        <end position="21"/>
    </location>
</feature>
<feature type="propeptide" id="PRO_0000400651" evidence="3">
    <location>
        <begin position="22"/>
        <end position="50"/>
    </location>
</feature>
<feature type="peptide" id="PRO_0000400652" description="Omega-theraphotoxin-Hhn1f 2">
    <location>
        <begin position="51"/>
        <end position="86"/>
    </location>
</feature>
<feature type="disulfide bond" evidence="1">
    <location>
        <begin position="52"/>
        <end position="66"/>
    </location>
</feature>
<feature type="disulfide bond" evidence="1">
    <location>
        <begin position="59"/>
        <end position="71"/>
    </location>
</feature>
<feature type="disulfide bond" evidence="1">
    <location>
        <begin position="65"/>
        <end position="78"/>
    </location>
</feature>
<name>H9A02_CYRHA</name>
<protein>
    <recommendedName>
        <fullName>Omega-theraphotoxin-Hhn1f 2</fullName>
        <shortName>Omega-TRTX-Hhn1f</shortName>
    </recommendedName>
    <alternativeName>
        <fullName>Hainantoxin-IX.2</fullName>
        <shortName>HNTX-IX.2</shortName>
    </alternativeName>
    <alternativeName>
        <fullName>Peptide F1-29.54</fullName>
    </alternativeName>
</protein>
<evidence type="ECO:0000250" key="1"/>
<evidence type="ECO:0000255" key="2"/>
<evidence type="ECO:0000269" key="3">
    <source>
    </source>
</evidence>
<evidence type="ECO:0000305" key="4"/>
<comment type="function">
    <text evidence="1">Ion channel inhibitor.</text>
</comment>
<comment type="subcellular location">
    <subcellularLocation>
        <location>Secreted</location>
    </subcellularLocation>
</comment>
<comment type="tissue specificity">
    <text>Expressed by the venom gland.</text>
</comment>
<comment type="domain">
    <text evidence="1">The presence of a 'disulfide through disulfide knot' structurally defines this protein as a knottin.</text>
</comment>
<comment type="similarity">
    <text evidence="4">Belongs to the neurotoxin 10 (Hwtx-1) family. 17 (Hntx-9) subfamily.</text>
</comment>
<dbReference type="EMBL" id="GU293025">
    <property type="protein sequence ID" value="ADB56841.1"/>
    <property type="molecule type" value="mRNA"/>
</dbReference>
<dbReference type="SMR" id="D2Y2E8"/>
<dbReference type="ArachnoServer" id="AS001945">
    <property type="toxin name" value="omega-theraphotoxin-Hhn1f"/>
</dbReference>
<dbReference type="GO" id="GO:0005576">
    <property type="term" value="C:extracellular region"/>
    <property type="evidence" value="ECO:0007669"/>
    <property type="project" value="UniProtKB-SubCell"/>
</dbReference>
<dbReference type="GO" id="GO:0008200">
    <property type="term" value="F:ion channel inhibitor activity"/>
    <property type="evidence" value="ECO:0007669"/>
    <property type="project" value="InterPro"/>
</dbReference>
<dbReference type="GO" id="GO:0090729">
    <property type="term" value="F:toxin activity"/>
    <property type="evidence" value="ECO:0007669"/>
    <property type="project" value="UniProtKB-KW"/>
</dbReference>
<dbReference type="InterPro" id="IPR011696">
    <property type="entry name" value="Huwentoxin-1"/>
</dbReference>
<dbReference type="InterPro" id="IPR013140">
    <property type="entry name" value="Huwentoxin_CS1"/>
</dbReference>
<dbReference type="Pfam" id="PF07740">
    <property type="entry name" value="Toxin_12"/>
    <property type="match status" value="1"/>
</dbReference>
<dbReference type="SUPFAM" id="SSF57059">
    <property type="entry name" value="omega toxin-like"/>
    <property type="match status" value="1"/>
</dbReference>
<dbReference type="PROSITE" id="PS60021">
    <property type="entry name" value="HWTX_1"/>
    <property type="match status" value="1"/>
</dbReference>
<sequence>MKSIVFVALFGLALLAVVCSASEDAHKELLKEVVRAVVVDKTDAVQAEERECRWYLGGCSQDGDCCKHLQCHSNYEWCIWDGTFSK</sequence>
<accession>D2Y2E8</accession>
<keyword id="KW-0903">Direct protein sequencing</keyword>
<keyword id="KW-1015">Disulfide bond</keyword>
<keyword id="KW-0872">Ion channel impairing toxin</keyword>
<keyword id="KW-0960">Knottin</keyword>
<keyword id="KW-0964">Secreted</keyword>
<keyword id="KW-0732">Signal</keyword>
<keyword id="KW-0800">Toxin</keyword>
<proteinExistence type="evidence at protein level"/>
<organism>
    <name type="scientific">Cyriopagopus hainanus</name>
    <name type="common">Chinese bird spider</name>
    <name type="synonym">Haplopelma hainanum</name>
    <dbReference type="NCBI Taxonomy" id="209901"/>
    <lineage>
        <taxon>Eukaryota</taxon>
        <taxon>Metazoa</taxon>
        <taxon>Ecdysozoa</taxon>
        <taxon>Arthropoda</taxon>
        <taxon>Chelicerata</taxon>
        <taxon>Arachnida</taxon>
        <taxon>Araneae</taxon>
        <taxon>Mygalomorphae</taxon>
        <taxon>Theraphosidae</taxon>
        <taxon>Haplopelma</taxon>
    </lineage>
</organism>